<proteinExistence type="inferred from homology"/>
<organism>
    <name type="scientific">Mycobacterium sp. (strain MCS)</name>
    <dbReference type="NCBI Taxonomy" id="164756"/>
    <lineage>
        <taxon>Bacteria</taxon>
        <taxon>Bacillati</taxon>
        <taxon>Actinomycetota</taxon>
        <taxon>Actinomycetes</taxon>
        <taxon>Mycobacteriales</taxon>
        <taxon>Mycobacteriaceae</taxon>
        <taxon>Mycobacterium</taxon>
    </lineage>
</organism>
<reference key="1">
    <citation type="submission" date="2006-06" db="EMBL/GenBank/DDBJ databases">
        <title>Complete sequence of chromosome of Mycobacterium sp. MCS.</title>
        <authorList>
            <consortium name="US DOE Joint Genome Institute"/>
            <person name="Copeland A."/>
            <person name="Lucas S."/>
            <person name="Lapidus A."/>
            <person name="Barry K."/>
            <person name="Detter J.C."/>
            <person name="Glavina del Rio T."/>
            <person name="Hammon N."/>
            <person name="Israni S."/>
            <person name="Dalin E."/>
            <person name="Tice H."/>
            <person name="Pitluck S."/>
            <person name="Martinez M."/>
            <person name="Schmutz J."/>
            <person name="Larimer F."/>
            <person name="Land M."/>
            <person name="Hauser L."/>
            <person name="Kyrpides N."/>
            <person name="Kim E."/>
            <person name="Miller C.D."/>
            <person name="Hughes J.E."/>
            <person name="Anderson A.J."/>
            <person name="Sims R.C."/>
            <person name="Richardson P."/>
        </authorList>
    </citation>
    <scope>NUCLEOTIDE SEQUENCE [LARGE SCALE GENOMIC DNA]</scope>
    <source>
        <strain>MCS</strain>
    </source>
</reference>
<evidence type="ECO:0000255" key="1">
    <source>
        <dbReference type="HAMAP-Rule" id="MF_01954"/>
    </source>
</evidence>
<protein>
    <recommendedName>
        <fullName evidence="1">Urease subunit beta</fullName>
        <ecNumber evidence="1">3.5.1.5</ecNumber>
    </recommendedName>
    <alternativeName>
        <fullName evidence="1">Urea amidohydrolase subunit beta</fullName>
    </alternativeName>
</protein>
<feature type="chain" id="PRO_1000070747" description="Urease subunit beta">
    <location>
        <begin position="1"/>
        <end position="105"/>
    </location>
</feature>
<dbReference type="EC" id="3.5.1.5" evidence="1"/>
<dbReference type="EMBL" id="CP000384">
    <property type="protein sequence ID" value="ABG08913.1"/>
    <property type="molecule type" value="Genomic_DNA"/>
</dbReference>
<dbReference type="SMR" id="Q1B871"/>
<dbReference type="KEGG" id="mmc:Mmcs_2806"/>
<dbReference type="HOGENOM" id="CLU_129707_1_1_11"/>
<dbReference type="BioCyc" id="MSP164756:G1G6O-2860-MONOMER"/>
<dbReference type="UniPathway" id="UPA00258">
    <property type="reaction ID" value="UER00370"/>
</dbReference>
<dbReference type="GO" id="GO:0035550">
    <property type="term" value="C:urease complex"/>
    <property type="evidence" value="ECO:0007669"/>
    <property type="project" value="InterPro"/>
</dbReference>
<dbReference type="GO" id="GO:0009039">
    <property type="term" value="F:urease activity"/>
    <property type="evidence" value="ECO:0007669"/>
    <property type="project" value="UniProtKB-UniRule"/>
</dbReference>
<dbReference type="GO" id="GO:0043419">
    <property type="term" value="P:urea catabolic process"/>
    <property type="evidence" value="ECO:0007669"/>
    <property type="project" value="UniProtKB-UniRule"/>
</dbReference>
<dbReference type="CDD" id="cd00407">
    <property type="entry name" value="Urease_beta"/>
    <property type="match status" value="1"/>
</dbReference>
<dbReference type="Gene3D" id="2.10.150.10">
    <property type="entry name" value="Urease, beta subunit"/>
    <property type="match status" value="1"/>
</dbReference>
<dbReference type="HAMAP" id="MF_01954">
    <property type="entry name" value="Urease_beta"/>
    <property type="match status" value="1"/>
</dbReference>
<dbReference type="InterPro" id="IPR002019">
    <property type="entry name" value="Urease_beta-like"/>
</dbReference>
<dbReference type="InterPro" id="IPR036461">
    <property type="entry name" value="Urease_betasu_sf"/>
</dbReference>
<dbReference type="InterPro" id="IPR050069">
    <property type="entry name" value="Urease_subunit"/>
</dbReference>
<dbReference type="NCBIfam" id="NF009682">
    <property type="entry name" value="PRK13203.1"/>
    <property type="match status" value="1"/>
</dbReference>
<dbReference type="NCBIfam" id="TIGR00192">
    <property type="entry name" value="urease_beta"/>
    <property type="match status" value="1"/>
</dbReference>
<dbReference type="PANTHER" id="PTHR33569">
    <property type="entry name" value="UREASE"/>
    <property type="match status" value="1"/>
</dbReference>
<dbReference type="PANTHER" id="PTHR33569:SF1">
    <property type="entry name" value="UREASE"/>
    <property type="match status" value="1"/>
</dbReference>
<dbReference type="Pfam" id="PF00699">
    <property type="entry name" value="Urease_beta"/>
    <property type="match status" value="1"/>
</dbReference>
<dbReference type="SUPFAM" id="SSF51278">
    <property type="entry name" value="Urease, beta-subunit"/>
    <property type="match status" value="1"/>
</dbReference>
<keyword id="KW-0963">Cytoplasm</keyword>
<keyword id="KW-0378">Hydrolase</keyword>
<sequence>MVPGEIFFGEGDVEINAGARRLEMEIVNTGDRPVQVGSHVHLPQANAALDFDRTAARGHRLDVPAGTAVRFEPGVAQRVRLVPLGGSREVHGLSLNPPGRLDGAS</sequence>
<gene>
    <name evidence="1" type="primary">ureB</name>
    <name type="ordered locus">Mmcs_2806</name>
</gene>
<comment type="catalytic activity">
    <reaction evidence="1">
        <text>urea + 2 H2O + H(+) = hydrogencarbonate + 2 NH4(+)</text>
        <dbReference type="Rhea" id="RHEA:20557"/>
        <dbReference type="ChEBI" id="CHEBI:15377"/>
        <dbReference type="ChEBI" id="CHEBI:15378"/>
        <dbReference type="ChEBI" id="CHEBI:16199"/>
        <dbReference type="ChEBI" id="CHEBI:17544"/>
        <dbReference type="ChEBI" id="CHEBI:28938"/>
        <dbReference type="EC" id="3.5.1.5"/>
    </reaction>
</comment>
<comment type="pathway">
    <text evidence="1">Nitrogen metabolism; urea degradation; CO(2) and NH(3) from urea (urease route): step 1/1.</text>
</comment>
<comment type="subunit">
    <text evidence="1">Heterotrimer of UreA (gamma), UreB (beta) and UreC (alpha) subunits. Three heterotrimers associate to form the active enzyme.</text>
</comment>
<comment type="subcellular location">
    <subcellularLocation>
        <location evidence="1">Cytoplasm</location>
    </subcellularLocation>
</comment>
<comment type="similarity">
    <text evidence="1">Belongs to the urease beta subunit family.</text>
</comment>
<name>URE2_MYCSS</name>
<accession>Q1B871</accession>